<protein>
    <recommendedName>
        <fullName evidence="1">Small ribosomal subunit protein uS13</fullName>
    </recommendedName>
    <alternativeName>
        <fullName evidence="3">30S ribosomal protein S13</fullName>
    </alternativeName>
</protein>
<reference key="1">
    <citation type="submission" date="2006-12" db="EMBL/GenBank/DDBJ databases">
        <title>Complete sequence of chromosome 1 of Paracoccus denitrificans PD1222.</title>
        <authorList>
            <person name="Copeland A."/>
            <person name="Lucas S."/>
            <person name="Lapidus A."/>
            <person name="Barry K."/>
            <person name="Detter J.C."/>
            <person name="Glavina del Rio T."/>
            <person name="Hammon N."/>
            <person name="Israni S."/>
            <person name="Dalin E."/>
            <person name="Tice H."/>
            <person name="Pitluck S."/>
            <person name="Munk A.C."/>
            <person name="Brettin T."/>
            <person name="Bruce D."/>
            <person name="Han C."/>
            <person name="Tapia R."/>
            <person name="Gilna P."/>
            <person name="Schmutz J."/>
            <person name="Larimer F."/>
            <person name="Land M."/>
            <person name="Hauser L."/>
            <person name="Kyrpides N."/>
            <person name="Lykidis A."/>
            <person name="Spiro S."/>
            <person name="Richardson D.J."/>
            <person name="Moir J.W.B."/>
            <person name="Ferguson S.J."/>
            <person name="van Spanning R.J.M."/>
            <person name="Richardson P."/>
        </authorList>
    </citation>
    <scope>NUCLEOTIDE SEQUENCE [LARGE SCALE GENOMIC DNA]</scope>
    <source>
        <strain>Pd 1222</strain>
    </source>
</reference>
<evidence type="ECO:0000255" key="1">
    <source>
        <dbReference type="HAMAP-Rule" id="MF_01315"/>
    </source>
</evidence>
<evidence type="ECO:0000256" key="2">
    <source>
        <dbReference type="SAM" id="MobiDB-lite"/>
    </source>
</evidence>
<evidence type="ECO:0000305" key="3"/>
<sequence length="122" mass="13610">MARIAGVNIPTGKRVPIALTYIHGIGSKFADEIVSAVGIEPTRRVNELSDAEVLQIREYIDANLTVEGDLRRETQMNIKRLMDLGSYRGLRHRRGLPVRGQRTHTNARTRKGPAKPIAGKKK</sequence>
<comment type="function">
    <text evidence="1">Located at the top of the head of the 30S subunit, it contacts several helices of the 16S rRNA. In the 70S ribosome it contacts the 23S rRNA (bridge B1a) and protein L5 of the 50S subunit (bridge B1b), connecting the 2 subunits; these bridges are implicated in subunit movement. Contacts the tRNAs in the A and P-sites.</text>
</comment>
<comment type="subunit">
    <text evidence="1">Part of the 30S ribosomal subunit. Forms a loose heterodimer with protein S19. Forms two bridges to the 50S subunit in the 70S ribosome.</text>
</comment>
<comment type="similarity">
    <text evidence="1">Belongs to the universal ribosomal protein uS13 family.</text>
</comment>
<comment type="sequence caution" evidence="3">
    <conflict type="erroneous initiation">
        <sequence resource="EMBL-CDS" id="ABL68894"/>
    </conflict>
</comment>
<feature type="chain" id="PRO_0000306669" description="Small ribosomal subunit protein uS13">
    <location>
        <begin position="1"/>
        <end position="122"/>
    </location>
</feature>
<feature type="region of interest" description="Disordered" evidence="2">
    <location>
        <begin position="92"/>
        <end position="122"/>
    </location>
</feature>
<proteinExistence type="inferred from homology"/>
<dbReference type="EMBL" id="CP000489">
    <property type="protein sequence ID" value="ABL68894.1"/>
    <property type="status" value="ALT_INIT"/>
    <property type="molecule type" value="Genomic_DNA"/>
</dbReference>
<dbReference type="RefSeq" id="WP_011747122.1">
    <property type="nucleotide sequence ID" value="NC_008686.1"/>
</dbReference>
<dbReference type="SMR" id="A1B050"/>
<dbReference type="STRING" id="318586.Pden_0782"/>
<dbReference type="EnsemblBacteria" id="ABL68894">
    <property type="protein sequence ID" value="ABL68894"/>
    <property type="gene ID" value="Pden_0782"/>
</dbReference>
<dbReference type="GeneID" id="93452006"/>
<dbReference type="KEGG" id="pde:Pden_0782"/>
<dbReference type="eggNOG" id="COG0099">
    <property type="taxonomic scope" value="Bacteria"/>
</dbReference>
<dbReference type="HOGENOM" id="CLU_103849_1_2_5"/>
<dbReference type="OrthoDB" id="9803610at2"/>
<dbReference type="Proteomes" id="UP000000361">
    <property type="component" value="Chromosome 1"/>
</dbReference>
<dbReference type="GO" id="GO:0005829">
    <property type="term" value="C:cytosol"/>
    <property type="evidence" value="ECO:0007669"/>
    <property type="project" value="TreeGrafter"/>
</dbReference>
<dbReference type="GO" id="GO:0015935">
    <property type="term" value="C:small ribosomal subunit"/>
    <property type="evidence" value="ECO:0007669"/>
    <property type="project" value="TreeGrafter"/>
</dbReference>
<dbReference type="GO" id="GO:0019843">
    <property type="term" value="F:rRNA binding"/>
    <property type="evidence" value="ECO:0007669"/>
    <property type="project" value="UniProtKB-UniRule"/>
</dbReference>
<dbReference type="GO" id="GO:0003735">
    <property type="term" value="F:structural constituent of ribosome"/>
    <property type="evidence" value="ECO:0007669"/>
    <property type="project" value="InterPro"/>
</dbReference>
<dbReference type="GO" id="GO:0000049">
    <property type="term" value="F:tRNA binding"/>
    <property type="evidence" value="ECO:0007669"/>
    <property type="project" value="UniProtKB-UniRule"/>
</dbReference>
<dbReference type="GO" id="GO:0006412">
    <property type="term" value="P:translation"/>
    <property type="evidence" value="ECO:0007669"/>
    <property type="project" value="UniProtKB-UniRule"/>
</dbReference>
<dbReference type="FunFam" id="1.10.8.50:FF:000001">
    <property type="entry name" value="30S ribosomal protein S13"/>
    <property type="match status" value="1"/>
</dbReference>
<dbReference type="FunFam" id="4.10.910.10:FF:000001">
    <property type="entry name" value="30S ribosomal protein S13"/>
    <property type="match status" value="1"/>
</dbReference>
<dbReference type="Gene3D" id="1.10.8.50">
    <property type="match status" value="1"/>
</dbReference>
<dbReference type="Gene3D" id="4.10.910.10">
    <property type="entry name" value="30s ribosomal protein s13, domain 2"/>
    <property type="match status" value="1"/>
</dbReference>
<dbReference type="HAMAP" id="MF_01315">
    <property type="entry name" value="Ribosomal_uS13"/>
    <property type="match status" value="1"/>
</dbReference>
<dbReference type="InterPro" id="IPR027437">
    <property type="entry name" value="Rbsml_uS13_C"/>
</dbReference>
<dbReference type="InterPro" id="IPR001892">
    <property type="entry name" value="Ribosomal_uS13"/>
</dbReference>
<dbReference type="InterPro" id="IPR010979">
    <property type="entry name" value="Ribosomal_uS13-like_H2TH"/>
</dbReference>
<dbReference type="InterPro" id="IPR019980">
    <property type="entry name" value="Ribosomal_uS13_bac-type"/>
</dbReference>
<dbReference type="InterPro" id="IPR018269">
    <property type="entry name" value="Ribosomal_uS13_CS"/>
</dbReference>
<dbReference type="NCBIfam" id="TIGR03631">
    <property type="entry name" value="uS13_bact"/>
    <property type="match status" value="1"/>
</dbReference>
<dbReference type="PANTHER" id="PTHR10871">
    <property type="entry name" value="30S RIBOSOMAL PROTEIN S13/40S RIBOSOMAL PROTEIN S18"/>
    <property type="match status" value="1"/>
</dbReference>
<dbReference type="PANTHER" id="PTHR10871:SF1">
    <property type="entry name" value="SMALL RIBOSOMAL SUBUNIT PROTEIN US13M"/>
    <property type="match status" value="1"/>
</dbReference>
<dbReference type="Pfam" id="PF00416">
    <property type="entry name" value="Ribosomal_S13"/>
    <property type="match status" value="1"/>
</dbReference>
<dbReference type="PIRSF" id="PIRSF002134">
    <property type="entry name" value="Ribosomal_S13"/>
    <property type="match status" value="1"/>
</dbReference>
<dbReference type="SUPFAM" id="SSF46946">
    <property type="entry name" value="S13-like H2TH domain"/>
    <property type="match status" value="1"/>
</dbReference>
<dbReference type="PROSITE" id="PS00646">
    <property type="entry name" value="RIBOSOMAL_S13_1"/>
    <property type="match status" value="1"/>
</dbReference>
<dbReference type="PROSITE" id="PS50159">
    <property type="entry name" value="RIBOSOMAL_S13_2"/>
    <property type="match status" value="1"/>
</dbReference>
<keyword id="KW-1185">Reference proteome</keyword>
<keyword id="KW-0687">Ribonucleoprotein</keyword>
<keyword id="KW-0689">Ribosomal protein</keyword>
<keyword id="KW-0694">RNA-binding</keyword>
<keyword id="KW-0699">rRNA-binding</keyword>
<keyword id="KW-0820">tRNA-binding</keyword>
<organism>
    <name type="scientific">Paracoccus denitrificans (strain Pd 1222)</name>
    <dbReference type="NCBI Taxonomy" id="318586"/>
    <lineage>
        <taxon>Bacteria</taxon>
        <taxon>Pseudomonadati</taxon>
        <taxon>Pseudomonadota</taxon>
        <taxon>Alphaproteobacteria</taxon>
        <taxon>Rhodobacterales</taxon>
        <taxon>Paracoccaceae</taxon>
        <taxon>Paracoccus</taxon>
    </lineage>
</organism>
<gene>
    <name evidence="1" type="primary">rpsM</name>
    <name type="ordered locus">Pden_0782</name>
</gene>
<name>RS13_PARDP</name>
<accession>A1B050</accession>